<name>H4_YEAST</name>
<comment type="function">
    <text>Core component of nucleosome. Nucleosomes wrap and compact DNA into chromatin, limiting DNA accessibility to the cellular machineries which require DNA as a template. Histones thereby play a central role in transcription regulation, DNA repair, DNA replication and chromosomal stability. DNA accessibility is regulated via a complex set of post-translational modifications of histones, also called histone code, and nucleosome remodeling. Component of the UAF (upstream activation factor) complex which interacts with the upstream element of the RNA polymerase I promoter and forms a stable preinitiation complex. Together with SPT15/TBP UAF seems to stimulate basal transcription to a fully activated level.</text>
</comment>
<comment type="subunit">
    <text evidence="13">The nucleosome is a histone octamer containing two molecules each of H2A, H2B, H3 and H4 assembled in one H3-H4 heterotetramer and two H2A-H2B heterodimers. The octamer wraps approximately 147 bp of DNA. Histone H4 is a component of the UAF (upstream activation factor) complex which consists of UAF30, RRN5, RRN9, RRN10, and histones H3 and H4.</text>
</comment>
<comment type="interaction">
    <interactant intactId="EBI-8113">
        <id>P02309</id>
    </interactant>
    <interactant intactId="EBI-3003">
        <id>P32447</id>
        <label>ASF1</label>
    </interactant>
    <organismsDiffer>false</organismsDiffer>
    <experiments>7</experiments>
</comment>
<comment type="interaction">
    <interactant intactId="EBI-8113">
        <id>P02309</id>
    </interactant>
    <interactant intactId="EBI-3493">
        <id>P35817</id>
        <label>BDF1</label>
    </interactant>
    <organismsDiffer>false</organismsDiffer>
    <experiments>3</experiments>
</comment>
<comment type="interaction">
    <interactant intactId="EBI-8113">
        <id>P02309</id>
    </interactant>
    <interactant intactId="EBI-6648">
        <id>Q08649</id>
        <label>ESA1</label>
    </interactant>
    <organismsDiffer>false</organismsDiffer>
    <experiments>5</experiments>
</comment>
<comment type="interaction">
    <interactant intactId="EBI-8113">
        <id>P02309</id>
    </interactant>
    <interactant intactId="EBI-6956">
        <id>Q06205</id>
        <label>FPR4</label>
    </interactant>
    <organismsDiffer>false</organismsDiffer>
    <experiments>5</experiments>
</comment>
<comment type="interaction">
    <interactant intactId="EBI-8113">
        <id>P02309</id>
    </interactant>
    <interactant intactId="EBI-8113">
        <id>P02309</id>
        <label>HHF2</label>
    </interactant>
    <organismsDiffer>false</organismsDiffer>
    <experiments>3</experiments>
</comment>
<comment type="interaction">
    <interactant intactId="EBI-8113">
        <id>P02309</id>
    </interactant>
    <interactant intactId="EBI-8098">
        <id>P61830</id>
        <label>HHT2</label>
    </interactant>
    <organismsDiffer>false</organismsDiffer>
    <experiments>12</experiments>
</comment>
<comment type="interaction">
    <interactant intactId="EBI-8113">
        <id>P02309</id>
    </interactant>
    <interactant intactId="EBI-31911">
        <id>Q12373</id>
        <label>HIF1</label>
    </interactant>
    <organismsDiffer>false</organismsDiffer>
    <experiments>7</experiments>
</comment>
<comment type="interaction">
    <interactant intactId="EBI-8113">
        <id>P02309</id>
    </interactant>
    <interactant intactId="EBI-16993">
        <id>P36124</id>
        <label>SET3</label>
    </interactant>
    <organismsDiffer>false</organismsDiffer>
    <experiments>2</experiments>
</comment>
<comment type="interaction">
    <interactant intactId="EBI-8113">
        <id>P02309</id>
    </interactant>
    <interactant intactId="EBI-24263">
        <id>P38890</id>
        <label>SET5</label>
    </interactant>
    <organismsDiffer>false</organismsDiffer>
    <experiments>3</experiments>
</comment>
<comment type="interaction">
    <interactant intactId="EBI-8113">
        <id>P02309</id>
    </interactant>
    <interactant intactId="EBI-17526">
        <id>P22082</id>
        <label>SNF2</label>
    </interactant>
    <organismsDiffer>false</organismsDiffer>
    <experiments>2</experiments>
</comment>
<comment type="interaction">
    <interactant intactId="EBI-8113">
        <id>P02309</id>
    </interactant>
    <interactant intactId="EBI-18410">
        <id>P32597</id>
        <label>STH1</label>
    </interactant>
    <organismsDiffer>false</organismsDiffer>
    <experiments>6</experiments>
</comment>
<comment type="interaction">
    <interactant intactId="EBI-8113">
        <id>P02309</id>
    </interactant>
    <interactant intactId="EBI-896414">
        <id>Q9H7Z6</id>
        <label>KAT8</label>
    </interactant>
    <organismsDiffer>true</organismsDiffer>
    <experiments>2</experiments>
</comment>
<comment type="subcellular location">
    <subcellularLocation>
        <location>Nucleus</location>
    </subcellularLocation>
    <subcellularLocation>
        <location>Chromosome</location>
    </subcellularLocation>
</comment>
<comment type="PTM">
    <text evidence="12">Glutarylation at Lys-92 (H4K91glu) destabilizes nucleosomes by promoting dissociation of the H2A-H2B dimers from nucleosomes.</text>
</comment>
<comment type="miscellaneous">
    <text evidence="4">Present with 524000 molecules/cell in log phase SD medium.</text>
</comment>
<comment type="similarity">
    <text evidence="15">Belongs to the histone H4 family.</text>
</comment>
<gene>
    <name type="primary">HHF1</name>
    <name type="ordered locus">YBR009C</name>
    <name type="ORF">YBR0122</name>
</gene>
<gene>
    <name type="primary">HHF2</name>
    <name type="ordered locus">YNL030W</name>
    <name type="ORF">N2752</name>
</gene>
<organism>
    <name type="scientific">Saccharomyces cerevisiae (strain ATCC 204508 / S288c)</name>
    <name type="common">Baker's yeast</name>
    <dbReference type="NCBI Taxonomy" id="559292"/>
    <lineage>
        <taxon>Eukaryota</taxon>
        <taxon>Fungi</taxon>
        <taxon>Dikarya</taxon>
        <taxon>Ascomycota</taxon>
        <taxon>Saccharomycotina</taxon>
        <taxon>Saccharomycetes</taxon>
        <taxon>Saccharomycetales</taxon>
        <taxon>Saccharomycetaceae</taxon>
        <taxon>Saccharomyces</taxon>
    </lineage>
</organism>
<sequence>MSGRGKGGKGLGKGGAKRHRKILRDNIQGITKPAIRRLARRGGVKRISGLIYEEVRAVLKSFLESVIRDSVTYTEHAKRKTVTSLDVVYALKRQGRTLYGFGG</sequence>
<proteinExistence type="evidence at protein level"/>
<keyword id="KW-0002">3D-structure</keyword>
<keyword id="KW-0007">Acetylation</keyword>
<keyword id="KW-0158">Chromosome</keyword>
<keyword id="KW-0903">Direct protein sequencing</keyword>
<keyword id="KW-0238">DNA-binding</keyword>
<keyword id="KW-0488">Methylation</keyword>
<keyword id="KW-0544">Nucleosome core</keyword>
<keyword id="KW-0539">Nucleus</keyword>
<keyword id="KW-0597">Phosphoprotein</keyword>
<keyword id="KW-1185">Reference proteome</keyword>
<accession>P02309</accession>
<accession>D6VQ10</accession>
<evidence type="ECO:0000250" key="1">
    <source>
        <dbReference type="UniProtKB" id="P62805"/>
    </source>
</evidence>
<evidence type="ECO:0000256" key="2">
    <source>
        <dbReference type="SAM" id="MobiDB-lite"/>
    </source>
</evidence>
<evidence type="ECO:0000269" key="3">
    <source>
    </source>
</evidence>
<evidence type="ECO:0000269" key="4">
    <source>
    </source>
</evidence>
<evidence type="ECO:0000269" key="5">
    <source>
    </source>
</evidence>
<evidence type="ECO:0000269" key="6">
    <source>
    </source>
</evidence>
<evidence type="ECO:0000269" key="7">
    <source>
    </source>
</evidence>
<evidence type="ECO:0000269" key="8">
    <source>
    </source>
</evidence>
<evidence type="ECO:0000269" key="9">
    <source>
    </source>
</evidence>
<evidence type="ECO:0000269" key="10">
    <source>
    </source>
</evidence>
<evidence type="ECO:0000269" key="11">
    <source>
    </source>
</evidence>
<evidence type="ECO:0000269" key="12">
    <source>
    </source>
</evidence>
<evidence type="ECO:0000269" key="13">
    <source>
    </source>
</evidence>
<evidence type="ECO:0000269" key="14">
    <source ref="24"/>
</evidence>
<evidence type="ECO:0000305" key="15"/>
<evidence type="ECO:0007744" key="16">
    <source>
    </source>
</evidence>
<evidence type="ECO:0007744" key="17">
    <source>
    </source>
</evidence>
<evidence type="ECO:0007744" key="18">
    <source>
    </source>
</evidence>
<evidence type="ECO:0007829" key="19">
    <source>
        <dbReference type="PDB" id="4PSX"/>
    </source>
</evidence>
<evidence type="ECO:0007829" key="20">
    <source>
        <dbReference type="PDB" id="6RXQ"/>
    </source>
</evidence>
<evidence type="ECO:0007829" key="21">
    <source>
        <dbReference type="PDB" id="7K78"/>
    </source>
</evidence>
<evidence type="ECO:0007829" key="22">
    <source>
        <dbReference type="PDB" id="7Z0O"/>
    </source>
</evidence>
<evidence type="ECO:0007829" key="23">
    <source>
        <dbReference type="PDB" id="8GHN"/>
    </source>
</evidence>
<reference key="1">
    <citation type="journal article" date="1983" name="J. Mol. Biol.">
        <title>DNA sequences of yeast H3 and H4 histone genes from two non-allelic gene sets encode identical H3 and H4 proteins.</title>
        <authorList>
            <person name="Smith M.M."/>
            <person name="Andresson O.S."/>
        </authorList>
    </citation>
    <scope>NUCLEOTIDE SEQUENCE [GENOMIC DNA]</scope>
</reference>
<reference key="2">
    <citation type="submission" date="1994-08" db="EMBL/GenBank/DDBJ databases">
        <authorList>
            <person name="Lohan A.J.E."/>
            <person name="Wolfe K.H."/>
        </authorList>
    </citation>
    <scope>NUCLEOTIDE SEQUENCE [GENOMIC DNA]</scope>
    <source>
        <strain>ATCC 204508 / S288c</strain>
    </source>
</reference>
<reference key="3">
    <citation type="journal article" date="1983" name="Nucleic Acids Res.">
        <title>The genes coding for histone H3 and H4 in Neurospora crassa are unique and contain intervening sequences.</title>
        <authorList>
            <person name="Woudt L.P."/>
            <person name="Pastink A."/>
            <person name="Kempers-Veenstra A.E."/>
            <person name="Jansen A.E.M."/>
            <person name="Mager W.H."/>
            <person name="Planta R.J."/>
        </authorList>
    </citation>
    <scope>NUCLEOTIDE SEQUENCE [GENOMIC DNA]</scope>
    <source>
        <strain>Carlsbergensis</strain>
    </source>
</reference>
<reference key="4">
    <citation type="journal article" date="1994" name="EMBO J.">
        <title>Complete DNA sequence of yeast chromosome II.</title>
        <authorList>
            <person name="Feldmann H."/>
            <person name="Aigle M."/>
            <person name="Aljinovic G."/>
            <person name="Andre B."/>
            <person name="Baclet M.C."/>
            <person name="Barthe C."/>
            <person name="Baur A."/>
            <person name="Becam A.-M."/>
            <person name="Biteau N."/>
            <person name="Boles E."/>
            <person name="Brandt T."/>
            <person name="Brendel M."/>
            <person name="Brueckner M."/>
            <person name="Bussereau F."/>
            <person name="Christiansen C."/>
            <person name="Contreras R."/>
            <person name="Crouzet M."/>
            <person name="Cziepluch C."/>
            <person name="Demolis N."/>
            <person name="Delaveau T."/>
            <person name="Doignon F."/>
            <person name="Domdey H."/>
            <person name="Duesterhus S."/>
            <person name="Dubois E."/>
            <person name="Dujon B."/>
            <person name="El Bakkoury M."/>
            <person name="Entian K.-D."/>
            <person name="Feuermann M."/>
            <person name="Fiers W."/>
            <person name="Fobo G.M."/>
            <person name="Fritz C."/>
            <person name="Gassenhuber J."/>
            <person name="Glansdorff N."/>
            <person name="Goffeau A."/>
            <person name="Grivell L.A."/>
            <person name="de Haan M."/>
            <person name="Hein C."/>
            <person name="Herbert C.J."/>
            <person name="Hollenberg C.P."/>
            <person name="Holmstroem K."/>
            <person name="Jacq C."/>
            <person name="Jacquet M."/>
            <person name="Jauniaux J.-C."/>
            <person name="Jonniaux J.-L."/>
            <person name="Kallesoee T."/>
            <person name="Kiesau P."/>
            <person name="Kirchrath L."/>
            <person name="Koetter P."/>
            <person name="Korol S."/>
            <person name="Liebl S."/>
            <person name="Logghe M."/>
            <person name="Lohan A.J.E."/>
            <person name="Louis E.J."/>
            <person name="Li Z.Y."/>
            <person name="Maat M.J."/>
            <person name="Mallet L."/>
            <person name="Mannhaupt G."/>
            <person name="Messenguy F."/>
            <person name="Miosga T."/>
            <person name="Molemans F."/>
            <person name="Mueller S."/>
            <person name="Nasr F."/>
            <person name="Obermaier B."/>
            <person name="Perea J."/>
            <person name="Pierard A."/>
            <person name="Piravandi E."/>
            <person name="Pohl F.M."/>
            <person name="Pohl T.M."/>
            <person name="Potier S."/>
            <person name="Proft M."/>
            <person name="Purnelle B."/>
            <person name="Ramezani Rad M."/>
            <person name="Rieger M."/>
            <person name="Rose M."/>
            <person name="Schaaff-Gerstenschlaeger I."/>
            <person name="Scherens B."/>
            <person name="Schwarzlose C."/>
            <person name="Skala J."/>
            <person name="Slonimski P.P."/>
            <person name="Smits P.H.M."/>
            <person name="Souciet J.-L."/>
            <person name="Steensma H.Y."/>
            <person name="Stucka R."/>
            <person name="Urrestarazu L.A."/>
            <person name="van der Aart Q.J.M."/>
            <person name="Van Dyck L."/>
            <person name="Vassarotti A."/>
            <person name="Vetter I."/>
            <person name="Vierendeels F."/>
            <person name="Vissers S."/>
            <person name="Wagner G."/>
            <person name="de Wergifosse P."/>
            <person name="Wolfe K.H."/>
            <person name="Zagulski M."/>
            <person name="Zimmermann F.K."/>
            <person name="Mewes H.-W."/>
            <person name="Kleine K."/>
        </authorList>
    </citation>
    <scope>NUCLEOTIDE SEQUENCE [LARGE SCALE GENOMIC DNA] (HHF1)</scope>
    <source>
        <strain>ATCC 204508 / S288c</strain>
    </source>
</reference>
<reference key="5">
    <citation type="journal article" date="1997" name="Nature">
        <title>The nucleotide sequence of Saccharomyces cerevisiae chromosome XIV and its evolutionary implications.</title>
        <authorList>
            <person name="Philippsen P."/>
            <person name="Kleine K."/>
            <person name="Poehlmann R."/>
            <person name="Duesterhoeft A."/>
            <person name="Hamberg K."/>
            <person name="Hegemann J.H."/>
            <person name="Obermaier B."/>
            <person name="Urrestarazu L.A."/>
            <person name="Aert R."/>
            <person name="Albermann K."/>
            <person name="Altmann R."/>
            <person name="Andre B."/>
            <person name="Baladron V."/>
            <person name="Ballesta J.P.G."/>
            <person name="Becam A.-M."/>
            <person name="Beinhauer J.D."/>
            <person name="Boskovic J."/>
            <person name="Buitrago M.J."/>
            <person name="Bussereau F."/>
            <person name="Coster F."/>
            <person name="Crouzet M."/>
            <person name="D'Angelo M."/>
            <person name="Dal Pero F."/>
            <person name="De Antoni A."/>
            <person name="del Rey F."/>
            <person name="Doignon F."/>
            <person name="Domdey H."/>
            <person name="Dubois E."/>
            <person name="Fiedler T.A."/>
            <person name="Fleig U."/>
            <person name="Floeth M."/>
            <person name="Fritz C."/>
            <person name="Gaillardin C."/>
            <person name="Garcia-Cantalejo J.M."/>
            <person name="Glansdorff N."/>
            <person name="Goffeau A."/>
            <person name="Gueldener U."/>
            <person name="Herbert C.J."/>
            <person name="Heumann K."/>
            <person name="Heuss-Neitzel D."/>
            <person name="Hilbert H."/>
            <person name="Hinni K."/>
            <person name="Iraqui Houssaini I."/>
            <person name="Jacquet M."/>
            <person name="Jimenez A."/>
            <person name="Jonniaux J.-L."/>
            <person name="Karpfinger-Hartl L."/>
            <person name="Lanfranchi G."/>
            <person name="Lepingle A."/>
            <person name="Levesque H."/>
            <person name="Lyck R."/>
            <person name="Maftahi M."/>
            <person name="Mallet L."/>
            <person name="Maurer C.T.C."/>
            <person name="Messenguy F."/>
            <person name="Mewes H.-W."/>
            <person name="Moestl D."/>
            <person name="Nasr F."/>
            <person name="Nicaud J.-M."/>
            <person name="Niedenthal R.K."/>
            <person name="Pandolfo D."/>
            <person name="Pierard A."/>
            <person name="Piravandi E."/>
            <person name="Planta R.J."/>
            <person name="Pohl T.M."/>
            <person name="Purnelle B."/>
            <person name="Rebischung C."/>
            <person name="Remacha M.A."/>
            <person name="Revuelta J.L."/>
            <person name="Rinke M."/>
            <person name="Saiz J.E."/>
            <person name="Sartorello F."/>
            <person name="Scherens B."/>
            <person name="Sen-Gupta M."/>
            <person name="Soler-Mira A."/>
            <person name="Urbanus J.H.M."/>
            <person name="Valle G."/>
            <person name="Van Dyck L."/>
            <person name="Verhasselt P."/>
            <person name="Vierendeels F."/>
            <person name="Vissers S."/>
            <person name="Voet M."/>
            <person name="Volckaert G."/>
            <person name="Wach A."/>
            <person name="Wambutt R."/>
            <person name="Wedler H."/>
            <person name="Zollner A."/>
            <person name="Hani J."/>
        </authorList>
    </citation>
    <scope>NUCLEOTIDE SEQUENCE [LARGE SCALE GENOMIC DNA] (HHF2)</scope>
    <source>
        <strain>ATCC 204508 / S288c</strain>
    </source>
</reference>
<reference key="6">
    <citation type="journal article" date="2014" name="G3 (Bethesda)">
        <title>The reference genome sequence of Saccharomyces cerevisiae: Then and now.</title>
        <authorList>
            <person name="Engel S.R."/>
            <person name="Dietrich F.S."/>
            <person name="Fisk D.G."/>
            <person name="Binkley G."/>
            <person name="Balakrishnan R."/>
            <person name="Costanzo M.C."/>
            <person name="Dwight S.S."/>
            <person name="Hitz B.C."/>
            <person name="Karra K."/>
            <person name="Nash R.S."/>
            <person name="Weng S."/>
            <person name="Wong E.D."/>
            <person name="Lloyd P."/>
            <person name="Skrzypek M.S."/>
            <person name="Miyasato S.R."/>
            <person name="Simison M."/>
            <person name="Cherry J.M."/>
        </authorList>
    </citation>
    <scope>GENOME REANNOTATION (HHF1 AND HHF2)</scope>
    <source>
        <strain>ATCC 204508 / S288c</strain>
    </source>
</reference>
<reference key="7">
    <citation type="journal article" date="2007" name="Genome Res.">
        <title>Approaching a complete repository of sequence-verified protein-encoding clones for Saccharomyces cerevisiae.</title>
        <authorList>
            <person name="Hu Y."/>
            <person name="Rolfs A."/>
            <person name="Bhullar B."/>
            <person name="Murthy T.V.S."/>
            <person name="Zhu C."/>
            <person name="Berger M.F."/>
            <person name="Camargo A.A."/>
            <person name="Kelley F."/>
            <person name="McCarron S."/>
            <person name="Jepson D."/>
            <person name="Richardson A."/>
            <person name="Raphael J."/>
            <person name="Moreira D."/>
            <person name="Taycher E."/>
            <person name="Zuo D."/>
            <person name="Mohr S."/>
            <person name="Kane M.F."/>
            <person name="Williamson J."/>
            <person name="Simpson A.J.G."/>
            <person name="Bulyk M.L."/>
            <person name="Harlow E."/>
            <person name="Marsischky G."/>
            <person name="Kolodner R.D."/>
            <person name="LaBaer J."/>
        </authorList>
    </citation>
    <scope>NUCLEOTIDE SEQUENCE [GENOMIC DNA]</scope>
    <source>
        <strain>ATCC 204508 / S288c</strain>
    </source>
</reference>
<reference key="8">
    <citation type="journal article" date="1980" name="Eur. J. Biochem.">
        <title>The histones of yeast. The isolation and partial structure of the core histones.</title>
        <authorList>
            <person name="Brandt W.F."/>
            <person name="Patterson K."/>
            <person name="von Holt C."/>
        </authorList>
    </citation>
    <scope>PROTEIN SEQUENCE OF 25-48; 69-83 AND 86-100</scope>
    <scope>PROBABLE CLEAVAGE OF INITIATOR METHIONINE</scope>
</reference>
<reference key="9">
    <citation type="journal article" date="1997" name="Proc. Natl. Acad. Sci. U.S.A.">
        <title>Histones H3 and H4 are components of upstream activation factor required for the high-level transcription of yeast rDNA by RNA polymerase I.</title>
        <authorList>
            <person name="Keener J."/>
            <person name="Dodd J.A."/>
            <person name="Lalo D."/>
            <person name="Nomura M."/>
        </authorList>
    </citation>
    <scope>IDENTIFICATION IN THE UAF COMPLEX</scope>
</reference>
<reference key="10">
    <citation type="journal article" date="2003" name="Nature">
        <title>Global analysis of protein expression in yeast.</title>
        <authorList>
            <person name="Ghaemmaghami S."/>
            <person name="Huh W.-K."/>
            <person name="Bower K."/>
            <person name="Howson R.W."/>
            <person name="Belle A."/>
            <person name="Dephoure N."/>
            <person name="O'Shea E.K."/>
            <person name="Weissman J.S."/>
        </authorList>
    </citation>
    <scope>LEVEL OF PROTEIN EXPRESSION [LARGE SCALE ANALYSIS]</scope>
</reference>
<reference key="11">
    <citation type="journal article" date="2007" name="Proc. Natl. Acad. Sci. U.S.A.">
        <title>Analysis of phosphorylation sites on proteins from Saccharomyces cerevisiae by electron transfer dissociation (ETD) mass spectrometry.</title>
        <authorList>
            <person name="Chi A."/>
            <person name="Huttenhower C."/>
            <person name="Geer L.Y."/>
            <person name="Coon J.J."/>
            <person name="Syka J.E.P."/>
            <person name="Bai D.L."/>
            <person name="Shabanowitz J."/>
            <person name="Burke D.J."/>
            <person name="Troyanskaya O.G."/>
            <person name="Hunt D.F."/>
        </authorList>
    </citation>
    <scope>PHOSPHORYLATION [LARGE SCALE ANALYSIS] AT SER-65</scope>
    <scope>IDENTIFICATION BY MASS SPECTROMETRY [LARGE SCALE ANALYSIS]</scope>
</reference>
<reference key="12">
    <citation type="journal article" date="2008" name="Mol. Cell. Proteomics">
        <title>A multidimensional chromatography technology for in-depth phosphoproteome analysis.</title>
        <authorList>
            <person name="Albuquerque C.P."/>
            <person name="Smolka M.B."/>
            <person name="Payne S.H."/>
            <person name="Bafna V."/>
            <person name="Eng J."/>
            <person name="Zhou H."/>
        </authorList>
    </citation>
    <scope>PHOSPHORYLATION [LARGE SCALE ANALYSIS] AT SER-61</scope>
    <scope>IDENTIFICATION BY MASS SPECTROMETRY [LARGE SCALE ANALYSIS]</scope>
</reference>
<reference key="13">
    <citation type="journal article" date="2009" name="J. Proteome Res.">
        <title>Identification and verification of lysine propionylation and butyrylation in yeast core histones using PTMap software.</title>
        <authorList>
            <person name="Zhang K."/>
            <person name="Chen Y."/>
            <person name="Zhang Z."/>
            <person name="Zhao Y."/>
        </authorList>
    </citation>
    <scope>ACETYLATION AT LYS-6; LYS-9; LYS-13 AND LYS-17</scope>
    <scope>BUTYRYLATION AT LYS-9</scope>
    <scope>METHYLATION AT ARG-56</scope>
</reference>
<reference key="14">
    <citation type="journal article" date="2009" name="Science">
        <title>Global analysis of Cdk1 substrate phosphorylation sites provides insights into evolution.</title>
        <authorList>
            <person name="Holt L.J."/>
            <person name="Tuch B.B."/>
            <person name="Villen J."/>
            <person name="Johnson A.D."/>
            <person name="Gygi S.P."/>
            <person name="Morgan D.O."/>
        </authorList>
    </citation>
    <scope>PHOSPHORYLATION [LARGE SCALE ANALYSIS] AT SER-61 AND SER-65</scope>
    <scope>IDENTIFICATION BY MASS SPECTROMETRY [LARGE SCALE ANALYSIS]</scope>
</reference>
<reference key="15">
    <citation type="journal article" date="2012" name="Mol. Cell. Proteomics">
        <title>Lysine succinylation and lysine malonylation in histones.</title>
        <authorList>
            <person name="Xie Z."/>
            <person name="Dai J."/>
            <person name="Dai L."/>
            <person name="Tan M."/>
            <person name="Cheng Z."/>
            <person name="Wu Y."/>
            <person name="Boeke J.D."/>
            <person name="Zhao Y."/>
        </authorList>
    </citation>
    <scope>SUCCINYLATION AT LYS-32 AND LYS-78</scope>
</reference>
<reference key="16">
    <citation type="journal article" date="2012" name="Nat. Struct. Mol. Biol.">
        <title>Methylation of H4 lysines 5, 8 and 12 by yeast Set5 calibrates chromatin stress responses.</title>
        <authorList>
            <person name="Green E.M."/>
            <person name="Mas G."/>
            <person name="Young N.L."/>
            <person name="Garcia B.A."/>
            <person name="Gozani O."/>
        </authorList>
    </citation>
    <scope>METHYLATION AT LYS-6; LYS-9 AND LYS-13</scope>
</reference>
<reference key="17">
    <citation type="journal article" date="2016" name="Mol. Cell">
        <title>Dynamic competing histone H4 K5K8 acetylation and butyrylation are hallmarks of highly active gene promoters.</title>
        <authorList>
            <person name="Goudarzi A."/>
            <person name="Zhang D."/>
            <person name="Huang H."/>
            <person name="Barral S."/>
            <person name="Kwon O.K."/>
            <person name="Qi S."/>
            <person name="Tang Z."/>
            <person name="Buchou T."/>
            <person name="Vitte A.L."/>
            <person name="He T."/>
            <person name="Cheng Z."/>
            <person name="Montellier E."/>
            <person name="Gaucher J."/>
            <person name="Curtet S."/>
            <person name="Debernardi A."/>
            <person name="Charbonnier G."/>
            <person name="Puthier D."/>
            <person name="Petosa C."/>
            <person name="Panne D."/>
            <person name="Rousseaux S."/>
            <person name="Roeder R.G."/>
            <person name="Zhao Y."/>
            <person name="Khochbin S."/>
        </authorList>
    </citation>
    <scope>BUTYRYLATION AT LYS-13</scope>
</reference>
<reference key="18">
    <citation type="journal article" date="2019" name="Mol. Cell">
        <title>Glutarylation of histone H4 lysine 91 regulates chromatin dynamics.</title>
        <authorList>
            <person name="Bao X."/>
            <person name="Liu Z."/>
            <person name="Zhang W."/>
            <person name="Gladysz K."/>
            <person name="Fung Y.M.E."/>
            <person name="Tian G."/>
            <person name="Xiong Y."/>
            <person name="Wong J.W.H."/>
            <person name="Yuen K.W.Y."/>
            <person name="Li X.D."/>
        </authorList>
    </citation>
    <scope>GLUTARYLATION AT LYS-92</scope>
    <scope>MUTAGENESIS OF LYS-92</scope>
</reference>
<reference key="19">
    <citation type="journal article" date="2000" name="EMBO J.">
        <title>The structural basis for the recognition of acetylated histone H4 by the bromodomain of histone acetyltransferase gcn5p.</title>
        <authorList>
            <person name="Owen D.J."/>
            <person name="Ornaghi P."/>
            <person name="Yang J.C."/>
            <person name="Lowe N."/>
            <person name="Evans P.R."/>
            <person name="Ballario P."/>
            <person name="Neuhaus D."/>
            <person name="Filetici P."/>
            <person name="Travers A.A."/>
        </authorList>
    </citation>
    <scope>X-RAY CRYSTALLOGRAPHY (1.87 ANGSTROMS) OF 16-30</scope>
    <scope>ACETYLATION AT LYS-17</scope>
</reference>
<reference key="20">
    <citation type="journal article" date="2001" name="EMBO J.">
        <title>Structure of the yeast nucleosome core particle reveals fundamental changes in internucleosome interactions.</title>
        <authorList>
            <person name="White C.L."/>
            <person name="Suto R.K."/>
            <person name="Luger K."/>
        </authorList>
    </citation>
    <scope>X-RAY CRYSTALLOGRAPHY (3.1 ANGSTROMS) OF H4 IN NUCLEOSOME COMPLEX</scope>
</reference>
<reference key="21">
    <citation type="journal article" date="2004" name="Proc. Natl. Acad. Sci. U.S.A.">
        <title>Structural basis for nicotinamide cleavage and ADP-ribose transfer by NAD(+)-dependent Sir2 histone/protein deacetylases.</title>
        <authorList>
            <person name="Zhao K."/>
            <person name="Harshaw R."/>
            <person name="Chai X."/>
            <person name="Marmorstein R."/>
        </authorList>
    </citation>
    <scope>X-RAY CRYSTALLOGRAPHY (1.50 ANGSTROMS) OF 13-22</scope>
    <scope>ACETYLATION AT LYS-17</scope>
</reference>
<reference key="22">
    <citation type="journal article" date="2006" name="Biochemistry">
        <title>The structural basis of sirtuin substrate affinity.</title>
        <authorList>
            <person name="Cosgrove M.S."/>
            <person name="Bever K."/>
            <person name="Avalos J.L."/>
            <person name="Muhammad S."/>
            <person name="Zhang X."/>
            <person name="Wolberger C."/>
        </authorList>
    </citation>
    <scope>X-RAY CRYSTALLOGRAPHY (2.20 ANGSTROMS) OF 76-86</scope>
    <scope>ACETYLATION AT LYS-80</scope>
</reference>
<reference key="23">
    <citation type="journal article" date="2006" name="Curr. Biol.">
        <title>The path of DNA in the kinetochore.</title>
        <authorList>
            <person name="Bloom K.S."/>
            <person name="Sharma S."/>
            <person name="Dokholyan N.V."/>
        </authorList>
    </citation>
    <scope>3D-STRUCTURE MODELING</scope>
</reference>
<reference key="24">
    <citation type="submission" date="2006-11" db="PDB data bank">
        <title>Structural basis for diacetylated histone H4 tail recognition by the second bromodomain of human BRD2.</title>
        <authorList>
            <person name="Padmanabhan B."/>
            <person name="Umehara T."/>
            <person name="Nakano K."/>
            <person name="Jang M.K."/>
            <person name="Ozato K."/>
            <person name="Yokohama S."/>
        </authorList>
    </citation>
    <scope>X-RAY CRYSTALLOGRAPHY (2.30 ANGSTROMS) OF 2-16</scope>
    <scope>ACETYLATION AT LYS-6 AND LYS-13</scope>
</reference>
<reference key="25">
    <citation type="journal article" date="2007" name="Mol. Cell">
        <title>Structural basis for nicotinamide inhibition and base exchange in Sir2 enzymes.</title>
        <authorList>
            <person name="Sanders B.D."/>
            <person name="Zhao K."/>
            <person name="Slama J.T."/>
            <person name="Marmorstein R."/>
        </authorList>
    </citation>
    <scope>X-RAY CRYSTALLOGRAPHY (2.00 ANGSTROMS) OF 13-23</scope>
    <scope>ACETYLATION AT LYS-17</scope>
</reference>
<reference key="26">
    <citation type="journal article" date="2011" name="Nature">
        <title>Structural basis for recognition of centromere histone variant CenH3 by the chaperone Scm3.</title>
        <authorList>
            <person name="Zhou Z."/>
            <person name="Feng H."/>
            <person name="Zhou B.R."/>
            <person name="Ghirlando R."/>
            <person name="Hu K."/>
            <person name="Zwolak A."/>
            <person name="Miller Jenkins L.M."/>
            <person name="Xiao H."/>
            <person name="Tjandra N."/>
            <person name="Wu C."/>
            <person name="Bai Y."/>
        </authorList>
    </citation>
    <scope>STRUCTURE BY NMR OF 42-103</scope>
</reference>
<reference key="27">
    <citation type="journal article" date="2012" name="EMBO J.">
        <title>MYST protein acetyltransferase activity requires active site lysine autoacetylation.</title>
        <authorList>
            <person name="Yuan H."/>
            <person name="Rossetto D."/>
            <person name="Mellert H."/>
            <person name="Dang W."/>
            <person name="Srinivasan M."/>
            <person name="Johnson J."/>
            <person name="Hodawadekar S."/>
            <person name="Ding E.C."/>
            <person name="Speicher K."/>
            <person name="Abshiru N."/>
            <person name="Perry R."/>
            <person name="Wu J."/>
            <person name="Yang C."/>
            <person name="Zheng Y.G."/>
            <person name="Speicher D.W."/>
            <person name="Thibault P."/>
            <person name="Verreault A."/>
            <person name="Johnson F.B."/>
            <person name="Berger S.L."/>
            <person name="Sternglanz R."/>
            <person name="McMahon S.B."/>
            <person name="Cote J."/>
            <person name="Marmorstein R."/>
        </authorList>
    </citation>
    <scope>X-RAY CRYSTALLOGRAPHY (2.10 ANGSTROMS) OF 12-23</scope>
</reference>
<feature type="initiator methionine" description="Removed" evidence="15">
    <location>
        <position position="1"/>
    </location>
</feature>
<feature type="chain" id="PRO_0000158377" description="Histone H4">
    <location>
        <begin position="2"/>
        <end position="103"/>
    </location>
</feature>
<feature type="DNA-binding region">
    <location>
        <begin position="17"/>
        <end position="21"/>
    </location>
</feature>
<feature type="region of interest" description="Disordered" evidence="2">
    <location>
        <begin position="1"/>
        <end position="20"/>
    </location>
</feature>
<feature type="compositionally biased region" description="Gly residues" evidence="2">
    <location>
        <begin position="1"/>
        <end position="14"/>
    </location>
</feature>
<feature type="modified residue" description="N6-acetyl-N6-methyllysine; alternate" evidence="1">
    <location>
        <position position="6"/>
    </location>
</feature>
<feature type="modified residue" description="N6-acetyllysine; alternate" evidence="8 14">
    <location>
        <position position="6"/>
    </location>
</feature>
<feature type="modified residue" description="N6-methyllysine; alternate" evidence="9">
    <location>
        <position position="6"/>
    </location>
</feature>
<feature type="modified residue" description="N6-acetyllysine; alternate" evidence="8 14">
    <location>
        <position position="9"/>
    </location>
</feature>
<feature type="modified residue" description="N6-butyryllysine; alternate" evidence="8">
    <location>
        <position position="9"/>
    </location>
</feature>
<feature type="modified residue" description="N6-methyllysine; alternate" evidence="9">
    <location>
        <position position="9"/>
    </location>
</feature>
<feature type="modified residue" description="N6-acetyl-N6-methyllysine; alternate" evidence="1">
    <location>
        <position position="13"/>
    </location>
</feature>
<feature type="modified residue" description="N6-acetyllysine; alternate" evidence="8 14">
    <location>
        <position position="13"/>
    </location>
</feature>
<feature type="modified residue" description="N6-butyryllysine; alternate" evidence="11">
    <location>
        <position position="13"/>
    </location>
</feature>
<feature type="modified residue" description="N6-methyllysine; alternate" evidence="9">
    <location>
        <position position="13"/>
    </location>
</feature>
<feature type="modified residue" description="N6-acetyllysine" evidence="3 5 7 8">
    <location>
        <position position="17"/>
    </location>
</feature>
<feature type="modified residue" description="N6-succinyllysine" evidence="10">
    <location>
        <position position="32"/>
    </location>
</feature>
<feature type="modified residue" description="Omega-N-methylarginine" evidence="8">
    <location>
        <position position="56"/>
    </location>
</feature>
<feature type="modified residue" description="Phosphoserine" evidence="17 18">
    <location>
        <position position="61"/>
    </location>
</feature>
<feature type="modified residue" description="Phosphoserine" evidence="16 18">
    <location>
        <position position="65"/>
    </location>
</feature>
<feature type="modified residue" description="N6-succinyllysine" evidence="10">
    <location>
        <position position="78"/>
    </location>
</feature>
<feature type="modified residue" description="N6-acetyllysine" evidence="6">
    <location>
        <position position="80"/>
    </location>
</feature>
<feature type="modified residue" description="N6-glutaryllysine" evidence="12">
    <location>
        <position position="92"/>
    </location>
</feature>
<feature type="mutagenesis site" description="Mimics glutarylation; delays in cell proliferation; increased sensitivity to DNA damaging agents." evidence="12">
    <original>K</original>
    <variation>E</variation>
    <location>
        <position position="92"/>
    </location>
</feature>
<feature type="mutagenesis site" description="Mimics acetylation; does not show increased sensitivity to DNA damaging agents." evidence="12">
    <original>K</original>
    <variation>Q</variation>
    <location>
        <position position="92"/>
    </location>
</feature>
<feature type="mutagenesis site" description="Mimics unmodified residue; does not show increased sensitivity to DNA damaging agents." evidence="12">
    <original>K</original>
    <variation>R</variation>
    <location>
        <position position="92"/>
    </location>
</feature>
<feature type="sequence conflict" description="In Ref. 8; AA sequence." evidence="15" ref="8">
    <original>R</original>
    <variation>K</variation>
    <location>
        <position position="46"/>
    </location>
</feature>
<feature type="strand" evidence="20">
    <location>
        <begin position="18"/>
        <end position="20"/>
    </location>
</feature>
<feature type="helix" evidence="22">
    <location>
        <begin position="27"/>
        <end position="29"/>
    </location>
</feature>
<feature type="helix" evidence="19">
    <location>
        <begin position="32"/>
        <end position="40"/>
    </location>
</feature>
<feature type="turn" evidence="19">
    <location>
        <begin position="41"/>
        <end position="43"/>
    </location>
</feature>
<feature type="strand" evidence="21">
    <location>
        <begin position="45"/>
        <end position="47"/>
    </location>
</feature>
<feature type="helix" evidence="22">
    <location>
        <begin position="52"/>
        <end position="76"/>
    </location>
</feature>
<feature type="strand" evidence="22">
    <location>
        <begin position="80"/>
        <end position="82"/>
    </location>
</feature>
<feature type="helix" evidence="22">
    <location>
        <begin position="84"/>
        <end position="92"/>
    </location>
</feature>
<feature type="turn" evidence="22">
    <location>
        <begin position="93"/>
        <end position="95"/>
    </location>
</feature>
<feature type="strand" evidence="23">
    <location>
        <begin position="99"/>
        <end position="101"/>
    </location>
</feature>
<protein>
    <recommendedName>
        <fullName>Histone H4</fullName>
    </recommendedName>
</protein>
<dbReference type="EMBL" id="X00724">
    <property type="protein sequence ID" value="CAA25311.1"/>
    <property type="molecule type" value="Genomic_DNA"/>
</dbReference>
<dbReference type="EMBL" id="X00725">
    <property type="protein sequence ID" value="CAA25313.1"/>
    <property type="molecule type" value="Genomic_DNA"/>
</dbReference>
<dbReference type="EMBL" id="K03154">
    <property type="protein sequence ID" value="AAA34660.1"/>
    <property type="molecule type" value="Genomic_DNA"/>
</dbReference>
<dbReference type="EMBL" id="Z35878">
    <property type="protein sequence ID" value="CAA84947.1"/>
    <property type="molecule type" value="Genomic_DNA"/>
</dbReference>
<dbReference type="EMBL" id="Z71306">
    <property type="protein sequence ID" value="CAA95892.1"/>
    <property type="molecule type" value="Genomic_DNA"/>
</dbReference>
<dbReference type="EMBL" id="AY692960">
    <property type="protein sequence ID" value="AAT92979.1"/>
    <property type="molecule type" value="Genomic_DNA"/>
</dbReference>
<dbReference type="EMBL" id="BK006936">
    <property type="protein sequence ID" value="DAA07130.1"/>
    <property type="molecule type" value="Genomic_DNA"/>
</dbReference>
<dbReference type="EMBL" id="BK006947">
    <property type="protein sequence ID" value="DAA10515.1"/>
    <property type="molecule type" value="Genomic_DNA"/>
</dbReference>
<dbReference type="PIR" id="A02647">
    <property type="entry name" value="HSBY4"/>
</dbReference>
<dbReference type="RefSeq" id="NP_009563.1">
    <property type="nucleotide sequence ID" value="NM_001178357.1"/>
</dbReference>
<dbReference type="RefSeq" id="NP_014368.1">
    <property type="nucleotide sequence ID" value="NM_001182869.1"/>
</dbReference>
<dbReference type="PDB" id="1E6I">
    <property type="method" value="X-ray"/>
    <property type="resolution" value="1.87 A"/>
    <property type="chains" value="P=16-30"/>
</dbReference>
<dbReference type="PDB" id="1ID3">
    <property type="method" value="X-ray"/>
    <property type="resolution" value="3.10 A"/>
    <property type="chains" value="B/F=2-103"/>
</dbReference>
<dbReference type="PDB" id="1Q1A">
    <property type="method" value="X-ray"/>
    <property type="resolution" value="1.50 A"/>
    <property type="chains" value="B=13-22"/>
</dbReference>
<dbReference type="PDB" id="1SZC">
    <property type="method" value="X-ray"/>
    <property type="resolution" value="1.75 A"/>
    <property type="chains" value="B=13-22"/>
</dbReference>
<dbReference type="PDB" id="1SZD">
    <property type="method" value="X-ray"/>
    <property type="resolution" value="1.50 A"/>
    <property type="chains" value="B=13-22"/>
</dbReference>
<dbReference type="PDB" id="2DVQ">
    <property type="method" value="X-ray"/>
    <property type="resolution" value="2.04 A"/>
    <property type="chains" value="P/Q=2-16"/>
</dbReference>
<dbReference type="PDB" id="2DVR">
    <property type="method" value="X-ray"/>
    <property type="resolution" value="2.30 A"/>
    <property type="chains" value="P/Q=2-16"/>
</dbReference>
<dbReference type="PDB" id="2E3K">
    <property type="method" value="X-ray"/>
    <property type="resolution" value="2.30 A"/>
    <property type="chains" value="Q/R=2-16"/>
</dbReference>
<dbReference type="PDB" id="2H2H">
    <property type="method" value="X-ray"/>
    <property type="resolution" value="2.20 A"/>
    <property type="chains" value="B=76-86"/>
</dbReference>
<dbReference type="PDB" id="2L5A">
    <property type="method" value="NMR"/>
    <property type="chains" value="A=42-103"/>
</dbReference>
<dbReference type="PDB" id="2QQF">
    <property type="method" value="X-ray"/>
    <property type="resolution" value="2.00 A"/>
    <property type="chains" value="B=13-23"/>
</dbReference>
<dbReference type="PDB" id="2QQG">
    <property type="method" value="X-ray"/>
    <property type="resolution" value="2.05 A"/>
    <property type="chains" value="B=13-23"/>
</dbReference>
<dbReference type="PDB" id="3TO6">
    <property type="method" value="X-ray"/>
    <property type="resolution" value="2.10 A"/>
    <property type="chains" value="B=12-23"/>
</dbReference>
<dbReference type="PDB" id="4JJN">
    <property type="method" value="X-ray"/>
    <property type="resolution" value="3.09 A"/>
    <property type="chains" value="B/F=2-103"/>
</dbReference>
<dbReference type="PDB" id="4KUD">
    <property type="method" value="X-ray"/>
    <property type="resolution" value="3.20 A"/>
    <property type="chains" value="B/F=1-103"/>
</dbReference>
<dbReference type="PDB" id="4PSX">
    <property type="method" value="X-ray"/>
    <property type="resolution" value="2.51 A"/>
    <property type="chains" value="C/F=2-49"/>
</dbReference>
<dbReference type="PDB" id="4TWI">
    <property type="method" value="X-ray"/>
    <property type="resolution" value="1.79 A"/>
    <property type="chains" value="B=9-21"/>
</dbReference>
<dbReference type="PDB" id="4TWJ">
    <property type="method" value="X-ray"/>
    <property type="resolution" value="1.65 A"/>
    <property type="chains" value="B=9-21"/>
</dbReference>
<dbReference type="PDB" id="5W0V">
    <property type="method" value="X-ray"/>
    <property type="resolution" value="2.82 A"/>
    <property type="chains" value="C/D=2-35"/>
</dbReference>
<dbReference type="PDB" id="5ZBA">
    <property type="method" value="X-ray"/>
    <property type="resolution" value="3.50 A"/>
    <property type="chains" value="D=1-103"/>
</dbReference>
<dbReference type="PDB" id="5ZBB">
    <property type="method" value="X-ray"/>
    <property type="resolution" value="3.60 A"/>
    <property type="chains" value="D=1-103"/>
</dbReference>
<dbReference type="PDB" id="6GEJ">
    <property type="method" value="EM"/>
    <property type="resolution" value="3.60 A"/>
    <property type="chains" value="C/D=1-103"/>
</dbReference>
<dbReference type="PDB" id="6GEN">
    <property type="method" value="EM"/>
    <property type="resolution" value="3.60 A"/>
    <property type="chains" value="C/D=1-103"/>
</dbReference>
<dbReference type="PDB" id="6QLD">
    <property type="method" value="EM"/>
    <property type="resolution" value="4.15 A"/>
    <property type="chains" value="b/f=25-103"/>
</dbReference>
<dbReference type="PDB" id="6RXJ">
    <property type="method" value="X-ray"/>
    <property type="resolution" value="1.60 A"/>
    <property type="chains" value="C/D=13-22"/>
</dbReference>
<dbReference type="PDB" id="6RXK">
    <property type="method" value="X-ray"/>
    <property type="resolution" value="1.35 A"/>
    <property type="chains" value="B=13-23"/>
</dbReference>
<dbReference type="PDB" id="6RXL">
    <property type="method" value="X-ray"/>
    <property type="resolution" value="2.30 A"/>
    <property type="chains" value="B=13-23"/>
</dbReference>
<dbReference type="PDB" id="6RXM">
    <property type="method" value="X-ray"/>
    <property type="resolution" value="1.92 A"/>
    <property type="chains" value="G/H/I/J/K/L=13-23"/>
</dbReference>
<dbReference type="PDB" id="6RXO">
    <property type="method" value="X-ray"/>
    <property type="resolution" value="1.95 A"/>
    <property type="chains" value="C/D=13-23"/>
</dbReference>
<dbReference type="PDB" id="6RXP">
    <property type="method" value="X-ray"/>
    <property type="resolution" value="1.80 A"/>
    <property type="chains" value="C/D=13-23"/>
</dbReference>
<dbReference type="PDB" id="6RXQ">
    <property type="method" value="X-ray"/>
    <property type="resolution" value="1.70 A"/>
    <property type="chains" value="E/F/G/H=13-23"/>
</dbReference>
<dbReference type="PDB" id="6RXR">
    <property type="method" value="X-ray"/>
    <property type="resolution" value="1.70 A"/>
    <property type="chains" value="E/F/G/H=13-23"/>
</dbReference>
<dbReference type="PDB" id="7E9C">
    <property type="method" value="EM"/>
    <property type="resolution" value="3.50 A"/>
    <property type="chains" value="B/F=1-103"/>
</dbReference>
<dbReference type="PDB" id="7E9F">
    <property type="method" value="EM"/>
    <property type="resolution" value="4.00 A"/>
    <property type="chains" value="B/F=1-103"/>
</dbReference>
<dbReference type="PDB" id="7K78">
    <property type="method" value="EM"/>
    <property type="resolution" value="3.10 A"/>
    <property type="chains" value="B/F=1-103"/>
</dbReference>
<dbReference type="PDB" id="7K7G">
    <property type="method" value="EM"/>
    <property type="resolution" value="4.20 A"/>
    <property type="chains" value="B/F=1-103"/>
</dbReference>
<dbReference type="PDB" id="7ON1">
    <property type="method" value="EM"/>
    <property type="resolution" value="3.35 A"/>
    <property type="chains" value="b/f=1-103"/>
</dbReference>
<dbReference type="PDB" id="7XAY">
    <property type="method" value="X-ray"/>
    <property type="resolution" value="3.30 A"/>
    <property type="chains" value="E=8-103"/>
</dbReference>
<dbReference type="PDB" id="7Z0O">
    <property type="method" value="EM"/>
    <property type="resolution" value="2.80 A"/>
    <property type="chains" value="B=1-103"/>
</dbReference>
<dbReference type="PDB" id="8GHM">
    <property type="method" value="EM"/>
    <property type="resolution" value="12.00 A"/>
    <property type="chains" value="N=1-103"/>
</dbReference>
<dbReference type="PDB" id="8GHN">
    <property type="method" value="EM"/>
    <property type="resolution" value="2.96 A"/>
    <property type="chains" value="N=1-103"/>
</dbReference>
<dbReference type="PDB" id="8OW0">
    <property type="method" value="EM"/>
    <property type="resolution" value="3.40 A"/>
    <property type="chains" value="b/f=1-103"/>
</dbReference>
<dbReference type="PDB" id="8OW1">
    <property type="method" value="EM"/>
    <property type="resolution" value="3.70 A"/>
    <property type="chains" value="b/f=1-103"/>
</dbReference>
<dbReference type="PDB" id="8QKU">
    <property type="method" value="EM"/>
    <property type="resolution" value="3.80 A"/>
    <property type="chains" value="C/D=1-103"/>
</dbReference>
<dbReference type="PDB" id="8QKV">
    <property type="method" value="EM"/>
    <property type="resolution" value="4.70 A"/>
    <property type="chains" value="C/D=1-103"/>
</dbReference>
<dbReference type="PDB" id="8QYV">
    <property type="method" value="EM"/>
    <property type="resolution" value="3.50 A"/>
    <property type="chains" value="C/D=1-103"/>
</dbReference>
<dbReference type="PDB" id="8QZ0">
    <property type="method" value="EM"/>
    <property type="resolution" value="3.80 A"/>
    <property type="chains" value="C/D=1-103"/>
</dbReference>
<dbReference type="PDB" id="8XGC">
    <property type="method" value="EM"/>
    <property type="resolution" value="3.70 A"/>
    <property type="chains" value="O/S=1-103"/>
</dbReference>
<dbReference type="PDB" id="9FBW">
    <property type="method" value="EM"/>
    <property type="resolution" value="4.40 A"/>
    <property type="chains" value="C/D=1-103"/>
</dbReference>
<dbReference type="PDBsum" id="1E6I"/>
<dbReference type="PDBsum" id="1ID3"/>
<dbReference type="PDBsum" id="1Q1A"/>
<dbReference type="PDBsum" id="1SZC"/>
<dbReference type="PDBsum" id="1SZD"/>
<dbReference type="PDBsum" id="2DVQ"/>
<dbReference type="PDBsum" id="2DVR"/>
<dbReference type="PDBsum" id="2E3K"/>
<dbReference type="PDBsum" id="2H2H"/>
<dbReference type="PDBsum" id="2L5A"/>
<dbReference type="PDBsum" id="2QQF"/>
<dbReference type="PDBsum" id="2QQG"/>
<dbReference type="PDBsum" id="3TO6"/>
<dbReference type="PDBsum" id="4JJN"/>
<dbReference type="PDBsum" id="4KUD"/>
<dbReference type="PDBsum" id="4PSX"/>
<dbReference type="PDBsum" id="4TWI"/>
<dbReference type="PDBsum" id="4TWJ"/>
<dbReference type="PDBsum" id="5W0V"/>
<dbReference type="PDBsum" id="5ZBA"/>
<dbReference type="PDBsum" id="5ZBB"/>
<dbReference type="PDBsum" id="6GEJ"/>
<dbReference type="PDBsum" id="6GEN"/>
<dbReference type="PDBsum" id="6QLD"/>
<dbReference type="PDBsum" id="6RXJ"/>
<dbReference type="PDBsum" id="6RXK"/>
<dbReference type="PDBsum" id="6RXL"/>
<dbReference type="PDBsum" id="6RXM"/>
<dbReference type="PDBsum" id="6RXO"/>
<dbReference type="PDBsum" id="6RXP"/>
<dbReference type="PDBsum" id="6RXQ"/>
<dbReference type="PDBsum" id="6RXR"/>
<dbReference type="PDBsum" id="7E9C"/>
<dbReference type="PDBsum" id="7E9F"/>
<dbReference type="PDBsum" id="7K78"/>
<dbReference type="PDBsum" id="7K7G"/>
<dbReference type="PDBsum" id="7ON1"/>
<dbReference type="PDBsum" id="7XAY"/>
<dbReference type="PDBsum" id="7Z0O"/>
<dbReference type="PDBsum" id="8GHM"/>
<dbReference type="PDBsum" id="8GHN"/>
<dbReference type="PDBsum" id="8OW0"/>
<dbReference type="PDBsum" id="8OW1"/>
<dbReference type="PDBsum" id="8QKU"/>
<dbReference type="PDBsum" id="8QKV"/>
<dbReference type="PDBsum" id="8QYV"/>
<dbReference type="PDBsum" id="8QZ0"/>
<dbReference type="PDBsum" id="8XGC"/>
<dbReference type="PDBsum" id="9FBW"/>
<dbReference type="BMRB" id="P02309"/>
<dbReference type="EMDB" id="EMD-14428"/>
<dbReference type="EMDB" id="EMD-17226"/>
<dbReference type="EMDB" id="EMD-17227"/>
<dbReference type="EMDB" id="EMD-18471"/>
<dbReference type="EMDB" id="EMD-18472"/>
<dbReference type="EMDB" id="EMD-18764"/>
<dbReference type="EMDB" id="EMD-18769"/>
<dbReference type="EMDB" id="EMD-22696"/>
<dbReference type="EMDB" id="EMD-22698"/>
<dbReference type="EMDB" id="EMD-31029"/>
<dbReference type="EMDB" id="EMD-31030"/>
<dbReference type="EMDB" id="EMD-38317"/>
<dbReference type="EMDB" id="EMD-4395"/>
<dbReference type="EMDB" id="EMD-4396"/>
<dbReference type="EMDB" id="EMD-4579"/>
<dbReference type="EMDB" id="EMD-50297"/>
<dbReference type="SMR" id="P02309"/>
<dbReference type="BioGRID" id="32710">
    <property type="interactions" value="804"/>
</dbReference>
<dbReference type="BioGRID" id="35797">
    <property type="interactions" value="526"/>
</dbReference>
<dbReference type="ComplexPortal" id="CPX-1101">
    <property type="entry name" value="RNA polymerase I upstream activating factor complex"/>
</dbReference>
<dbReference type="ComplexPortal" id="CPX-1610">
    <property type="entry name" value="Nucleosome, variant HTA2-HTB2"/>
</dbReference>
<dbReference type="ComplexPortal" id="CPX-1611">
    <property type="entry name" value="Nucleosome, variant HTA2-HTB1"/>
</dbReference>
<dbReference type="ComplexPortal" id="CPX-1612">
    <property type="entry name" value="Nucleosome, variant HTA1-HTB1"/>
</dbReference>
<dbReference type="ComplexPortal" id="CPX-1613">
    <property type="entry name" value="Nucleosome, variant HTZ1-HTB1"/>
</dbReference>
<dbReference type="ComplexPortal" id="CPX-1614">
    <property type="entry name" value="Nucleosome, variant HTZ1-HTB2"/>
</dbReference>
<dbReference type="ComplexPortal" id="CPX-2566">
    <property type="entry name" value="Nucleosome, variant HTA1-HTB2"/>
</dbReference>
<dbReference type="DIP" id="DIP-418N"/>
<dbReference type="FunCoup" id="P02309">
    <property type="interactions" value="1819"/>
</dbReference>
<dbReference type="IntAct" id="P02309">
    <property type="interactions" value="343"/>
</dbReference>
<dbReference type="MINT" id="P02309"/>
<dbReference type="STRING" id="4932.YBR009C"/>
<dbReference type="iPTMnet" id="P02309"/>
<dbReference type="PaxDb" id="4932-YBR009C"/>
<dbReference type="PeptideAtlas" id="P02309"/>
<dbReference type="ABCD" id="P02309">
    <property type="antibodies" value="1 sequenced antibody"/>
</dbReference>
<dbReference type="EnsemblFungi" id="YBR009C_mRNA">
    <property type="protein sequence ID" value="YBR009C"/>
    <property type="gene ID" value="YBR009C"/>
</dbReference>
<dbReference type="EnsemblFungi" id="YNL030W_mRNA">
    <property type="protein sequence ID" value="YNL030W"/>
    <property type="gene ID" value="YNL030W"/>
</dbReference>
<dbReference type="GeneID" id="852294"/>
<dbReference type="GeneID" id="855701"/>
<dbReference type="KEGG" id="sce:YBR009C"/>
<dbReference type="KEGG" id="sce:YNL030W"/>
<dbReference type="AGR" id="SGD:S000000213"/>
<dbReference type="AGR" id="SGD:S000004975"/>
<dbReference type="SGD" id="S000000213">
    <property type="gene designation" value="HHF1"/>
</dbReference>
<dbReference type="SGD" id="S000004975">
    <property type="gene designation" value="HHF2"/>
</dbReference>
<dbReference type="VEuPathDB" id="FungiDB:YBR009C"/>
<dbReference type="VEuPathDB" id="FungiDB:YNL030W"/>
<dbReference type="eggNOG" id="KOG3467">
    <property type="taxonomic scope" value="Eukaryota"/>
</dbReference>
<dbReference type="GeneTree" id="ENSGT01060000248528"/>
<dbReference type="HOGENOM" id="CLU_109117_2_3_1"/>
<dbReference type="InParanoid" id="P02309"/>
<dbReference type="OMA" id="QKEHING"/>
<dbReference type="OrthoDB" id="4061161at2759"/>
<dbReference type="BioCyc" id="YEAST:G3O-28996-MONOMER"/>
<dbReference type="Reactome" id="R-SCE-2299718">
    <property type="pathway name" value="Condensation of Prophase Chromosomes"/>
</dbReference>
<dbReference type="Reactome" id="R-SCE-2559580">
    <property type="pathway name" value="Oxidative Stress Induced Senescence"/>
</dbReference>
<dbReference type="Reactome" id="R-SCE-3214815">
    <property type="pathway name" value="HDACs deacetylate histones"/>
</dbReference>
<dbReference type="Reactome" id="R-SCE-3214847">
    <property type="pathway name" value="HATs acetylate histones"/>
</dbReference>
<dbReference type="Reactome" id="R-SCE-3214858">
    <property type="pathway name" value="RMTs methylate histone arginines"/>
</dbReference>
<dbReference type="Reactome" id="R-SCE-427359">
    <property type="pathway name" value="SIRT1 negatively regulates rRNA expression"/>
</dbReference>
<dbReference type="Reactome" id="R-SCE-4551638">
    <property type="pathway name" value="SUMOylation of chromatin organization proteins"/>
</dbReference>
<dbReference type="Reactome" id="R-SCE-5625886">
    <property type="pathway name" value="Activated PKN1 stimulates transcription of AR (androgen receptor) regulated genes KLK2 and KLK3"/>
</dbReference>
<dbReference type="Reactome" id="R-SCE-5693565">
    <property type="pathway name" value="Recruitment and ATM-mediated phosphorylation of repair and signaling proteins at DNA double strand breaks"/>
</dbReference>
<dbReference type="Reactome" id="R-SCE-68616">
    <property type="pathway name" value="Assembly of the ORC complex at the origin of replication"/>
</dbReference>
<dbReference type="Reactome" id="R-SCE-73772">
    <property type="pathway name" value="RNA Polymerase I Promoter Escape"/>
</dbReference>
<dbReference type="Reactome" id="R-SCE-9018519">
    <property type="pathway name" value="Estrogen-dependent gene expression"/>
</dbReference>
<dbReference type="BioGRID-ORCS" id="852294">
    <property type="hits" value="5 hits in 10 CRISPR screens"/>
</dbReference>
<dbReference type="BioGRID-ORCS" id="855701">
    <property type="hits" value="0 hits in 10 CRISPR screens"/>
</dbReference>
<dbReference type="ChiTaRS" id="HHF2">
    <property type="organism name" value="yeast"/>
</dbReference>
<dbReference type="EvolutionaryTrace" id="P02309"/>
<dbReference type="PRO" id="PR:P02309"/>
<dbReference type="Proteomes" id="UP000002311">
    <property type="component" value="Chromosome II"/>
</dbReference>
<dbReference type="Proteomes" id="UP000002311">
    <property type="component" value="Chromosome XIV"/>
</dbReference>
<dbReference type="RNAct" id="P02309">
    <property type="molecule type" value="protein"/>
</dbReference>
<dbReference type="GO" id="GO:0000786">
    <property type="term" value="C:nucleosome"/>
    <property type="evidence" value="ECO:0000353"/>
    <property type="project" value="ComplexPortal"/>
</dbReference>
<dbReference type="GO" id="GO:0005634">
    <property type="term" value="C:nucleus"/>
    <property type="evidence" value="ECO:0000303"/>
    <property type="project" value="ComplexPortal"/>
</dbReference>
<dbReference type="GO" id="GO:0000500">
    <property type="term" value="C:RNA polymerase I upstream activating factor complex"/>
    <property type="evidence" value="ECO:0000353"/>
    <property type="project" value="ComplexPortal"/>
</dbReference>
<dbReference type="GO" id="GO:0003677">
    <property type="term" value="F:DNA binding"/>
    <property type="evidence" value="ECO:0000318"/>
    <property type="project" value="GO_Central"/>
</dbReference>
<dbReference type="GO" id="GO:0042802">
    <property type="term" value="F:identical protein binding"/>
    <property type="evidence" value="ECO:0000353"/>
    <property type="project" value="IntAct"/>
</dbReference>
<dbReference type="GO" id="GO:0046982">
    <property type="term" value="F:protein heterodimerization activity"/>
    <property type="evidence" value="ECO:0007669"/>
    <property type="project" value="InterPro"/>
</dbReference>
<dbReference type="GO" id="GO:0030527">
    <property type="term" value="F:structural constituent of chromatin"/>
    <property type="evidence" value="ECO:0007669"/>
    <property type="project" value="InterPro"/>
</dbReference>
<dbReference type="GO" id="GO:0006325">
    <property type="term" value="P:chromatin organization"/>
    <property type="evidence" value="ECO:0000304"/>
    <property type="project" value="SGD"/>
</dbReference>
<dbReference type="GO" id="GO:0042790">
    <property type="term" value="P:nucleolar large rRNA transcription by RNA polymerase I"/>
    <property type="evidence" value="ECO:0000314"/>
    <property type="project" value="ComplexPortal"/>
</dbReference>
<dbReference type="GO" id="GO:0006334">
    <property type="term" value="P:nucleosome assembly"/>
    <property type="evidence" value="ECO:0000318"/>
    <property type="project" value="GO_Central"/>
</dbReference>
<dbReference type="GO" id="GO:0045943">
    <property type="term" value="P:positive regulation of transcription by RNA polymerase I"/>
    <property type="evidence" value="ECO:0000314"/>
    <property type="project" value="ComplexPortal"/>
</dbReference>
<dbReference type="GO" id="GO:0006355">
    <property type="term" value="P:regulation of DNA-templated transcription"/>
    <property type="evidence" value="ECO:0000303"/>
    <property type="project" value="ComplexPortal"/>
</dbReference>
<dbReference type="CDD" id="cd22912">
    <property type="entry name" value="HFD_H4"/>
    <property type="match status" value="1"/>
</dbReference>
<dbReference type="FunFam" id="1.10.20.10:FF:000007">
    <property type="entry name" value="Histone H4"/>
    <property type="match status" value="1"/>
</dbReference>
<dbReference type="Gene3D" id="1.10.20.10">
    <property type="entry name" value="Histone, subunit A"/>
    <property type="match status" value="1"/>
</dbReference>
<dbReference type="InterPro" id="IPR035425">
    <property type="entry name" value="CENP-T/H4_C"/>
</dbReference>
<dbReference type="InterPro" id="IPR009072">
    <property type="entry name" value="Histone-fold"/>
</dbReference>
<dbReference type="InterPro" id="IPR001951">
    <property type="entry name" value="Histone_H4"/>
</dbReference>
<dbReference type="InterPro" id="IPR019809">
    <property type="entry name" value="Histone_H4_CS"/>
</dbReference>
<dbReference type="PANTHER" id="PTHR10484">
    <property type="entry name" value="HISTONE H4"/>
    <property type="match status" value="1"/>
</dbReference>
<dbReference type="Pfam" id="PF15511">
    <property type="entry name" value="CENP-T_C"/>
    <property type="match status" value="1"/>
</dbReference>
<dbReference type="PRINTS" id="PR00623">
    <property type="entry name" value="HISTONEH4"/>
</dbReference>
<dbReference type="SMART" id="SM00417">
    <property type="entry name" value="H4"/>
    <property type="match status" value="1"/>
</dbReference>
<dbReference type="SUPFAM" id="SSF47113">
    <property type="entry name" value="Histone-fold"/>
    <property type="match status" value="1"/>
</dbReference>
<dbReference type="PROSITE" id="PS00047">
    <property type="entry name" value="HISTONE_H4"/>
    <property type="match status" value="1"/>
</dbReference>